<protein>
    <recommendedName>
        <fullName>Bromodomain-containing protein 9</fullName>
    </recommendedName>
</protein>
<dbReference type="EMBL" id="BC067977">
    <property type="protein sequence ID" value="AAH67977.1"/>
    <property type="molecule type" value="mRNA"/>
</dbReference>
<dbReference type="RefSeq" id="NP_998862.1">
    <property type="nucleotide sequence ID" value="NM_213697.2"/>
</dbReference>
<dbReference type="SMR" id="Q6NVM8"/>
<dbReference type="FunCoup" id="Q6NVM8">
    <property type="interactions" value="3164"/>
</dbReference>
<dbReference type="STRING" id="8364.ENSXETP00000004843"/>
<dbReference type="PaxDb" id="8364-ENSXETP00000028698"/>
<dbReference type="GeneID" id="407874"/>
<dbReference type="KEGG" id="xtr:407874"/>
<dbReference type="AGR" id="Xenbase:XB-GENE-969470"/>
<dbReference type="CTD" id="65980"/>
<dbReference type="Xenbase" id="XB-GENE-969470">
    <property type="gene designation" value="brd9"/>
</dbReference>
<dbReference type="eggNOG" id="KOG1828">
    <property type="taxonomic scope" value="Eukaryota"/>
</dbReference>
<dbReference type="InParanoid" id="Q6NVM8"/>
<dbReference type="OrthoDB" id="21648at2759"/>
<dbReference type="Proteomes" id="UP000008143">
    <property type="component" value="Chromosome 6"/>
</dbReference>
<dbReference type="GO" id="GO:0005634">
    <property type="term" value="C:nucleus"/>
    <property type="evidence" value="ECO:0000250"/>
    <property type="project" value="UniProtKB"/>
</dbReference>
<dbReference type="GO" id="GO:0070577">
    <property type="term" value="F:lysine-acetylated histone binding"/>
    <property type="evidence" value="ECO:0000250"/>
    <property type="project" value="UniProtKB"/>
</dbReference>
<dbReference type="GO" id="GO:0006325">
    <property type="term" value="P:chromatin organization"/>
    <property type="evidence" value="ECO:0007669"/>
    <property type="project" value="UniProtKB-KW"/>
</dbReference>
<dbReference type="CDD" id="cd05513">
    <property type="entry name" value="Bromo_brd7_like"/>
    <property type="match status" value="1"/>
</dbReference>
<dbReference type="FunFam" id="1.20.920.10:FF:000022">
    <property type="entry name" value="Putative bromodomain-containing protein 9"/>
    <property type="match status" value="1"/>
</dbReference>
<dbReference type="Gene3D" id="1.20.920.10">
    <property type="entry name" value="Bromodomain-like"/>
    <property type="match status" value="1"/>
</dbReference>
<dbReference type="InterPro" id="IPR001487">
    <property type="entry name" value="Bromodomain"/>
</dbReference>
<dbReference type="InterPro" id="IPR036427">
    <property type="entry name" value="Bromodomain-like_sf"/>
</dbReference>
<dbReference type="InterPro" id="IPR051831">
    <property type="entry name" value="Bromodomain_contain_prot"/>
</dbReference>
<dbReference type="InterPro" id="IPR018359">
    <property type="entry name" value="Bromodomain_CS"/>
</dbReference>
<dbReference type="InterPro" id="IPR021900">
    <property type="entry name" value="DUF3512"/>
</dbReference>
<dbReference type="PANTHER" id="PTHR22881">
    <property type="entry name" value="BROMODOMAIN CONTAINING PROTEIN"/>
    <property type="match status" value="1"/>
</dbReference>
<dbReference type="PANTHER" id="PTHR22881:SF4">
    <property type="entry name" value="BROMODOMAIN-CONTAINING PROTEIN 9"/>
    <property type="match status" value="1"/>
</dbReference>
<dbReference type="Pfam" id="PF00439">
    <property type="entry name" value="Bromodomain"/>
    <property type="match status" value="1"/>
</dbReference>
<dbReference type="Pfam" id="PF12024">
    <property type="entry name" value="DUF3512"/>
    <property type="match status" value="1"/>
</dbReference>
<dbReference type="PRINTS" id="PR00503">
    <property type="entry name" value="BROMODOMAIN"/>
</dbReference>
<dbReference type="SMART" id="SM00297">
    <property type="entry name" value="BROMO"/>
    <property type="match status" value="1"/>
</dbReference>
<dbReference type="SUPFAM" id="SSF47370">
    <property type="entry name" value="Bromodomain"/>
    <property type="match status" value="1"/>
</dbReference>
<dbReference type="PROSITE" id="PS00633">
    <property type="entry name" value="BROMODOMAIN_1"/>
    <property type="match status" value="1"/>
</dbReference>
<dbReference type="PROSITE" id="PS50014">
    <property type="entry name" value="BROMODOMAIN_2"/>
    <property type="match status" value="1"/>
</dbReference>
<feature type="chain" id="PRO_0000239223" description="Bromodomain-containing protein 9">
    <location>
        <begin position="1"/>
        <end position="596"/>
    </location>
</feature>
<feature type="domain" description="Bromo" evidence="2">
    <location>
        <begin position="148"/>
        <end position="252"/>
    </location>
</feature>
<feature type="region of interest" description="Disordered" evidence="3">
    <location>
        <begin position="1"/>
        <end position="31"/>
    </location>
</feature>
<feature type="region of interest" description="Disordered" evidence="3">
    <location>
        <begin position="49"/>
        <end position="119"/>
    </location>
</feature>
<feature type="region of interest" description="Histone H4K5ac H4K8ac and histone H4K5bu H4K8bu binding" evidence="1">
    <location>
        <begin position="226"/>
        <end position="228"/>
    </location>
</feature>
<feature type="region of interest" description="Disordered" evidence="3">
    <location>
        <begin position="537"/>
        <end position="596"/>
    </location>
</feature>
<feature type="compositionally biased region" description="Basic residues" evidence="3">
    <location>
        <begin position="1"/>
        <end position="10"/>
    </location>
</feature>
<feature type="compositionally biased region" description="Basic and acidic residues" evidence="3">
    <location>
        <begin position="61"/>
        <end position="73"/>
    </location>
</feature>
<feature type="compositionally biased region" description="Basic residues" evidence="3">
    <location>
        <begin position="74"/>
        <end position="84"/>
    </location>
</feature>
<feature type="compositionally biased region" description="Basic and acidic residues" evidence="3">
    <location>
        <begin position="85"/>
        <end position="98"/>
    </location>
</feature>
<feature type="compositionally biased region" description="Basic residues" evidence="3">
    <location>
        <begin position="99"/>
        <end position="109"/>
    </location>
</feature>
<feature type="compositionally biased region" description="Basic and acidic residues" evidence="3">
    <location>
        <begin position="537"/>
        <end position="547"/>
    </location>
</feature>
<feature type="compositionally biased region" description="Low complexity" evidence="3">
    <location>
        <begin position="548"/>
        <end position="559"/>
    </location>
</feature>
<feature type="site" description="Histone H4K5ac H4K8ac and histone H4K5bu H4K8bu binding" evidence="1">
    <location>
        <position position="181"/>
    </location>
</feature>
<feature type="site" description="Histone H4K5ac H4K8ac and histone H4K5bu H4K8bu binding" evidence="1">
    <location>
        <position position="234"/>
    </location>
</feature>
<gene>
    <name type="primary">brd9</name>
</gene>
<name>BRD9_XENTR</name>
<sequence length="596" mass="67908">MGKKHKKHKSEWRSYDAGELGSPGDQSQYYVDKPLEKPLKLVLKVGGSEVTELSGSGHDSSFYEDRSDHERERHKEKKKKKKKKSEKEKDKYLDEDERRRRKEEKKRKREKEQCDSEGETEVFESVRKVDIEATDRPVRACRTHPAENESTPLQQLLEYFLRQLQRKDPNGFFAFPVTDQIAPGYFMIIKNPMDFSTMKEKISQNEYKSVTEFKADFKLMCDNAMTYNRPETVYYKLAKKLLHTGFKMMSKQAALLGDEDTTTEEPTPEIIMPTAAEVVKKSKKPSKDMFRVMEEDQSSIFEPEGNACSLTDSTAEEHVLALVEHAADEARDKINRYLPNCRIGYLKKNADGTLIYTVVNGDPENEEEDTHLVDLSSLSSKLLPSFTTLGFKEDRRHKVTFLNSTGTALSLQNNTLFTNLKPDQIDLMYAGYGDDTGIQCALSLQEFVKDCGSFAKRMVNDLLDQITGGDHSRTIYQMAGSEREGSSNSVLDYMALKTYSDVSLDMSMLSSLDKVKKELEHEDSHLNLDDASKLLPDFHDVHNDRGGSRPSSSSSVSNNSERDHHLGSPSRISVGEQQDIHDPYEFLQSPETENQN</sequence>
<proteinExistence type="evidence at transcript level"/>
<evidence type="ECO:0000250" key="1">
    <source>
        <dbReference type="UniProtKB" id="Q9H8M2"/>
    </source>
</evidence>
<evidence type="ECO:0000255" key="2">
    <source>
        <dbReference type="PROSITE-ProRule" id="PRU00035"/>
    </source>
</evidence>
<evidence type="ECO:0000256" key="3">
    <source>
        <dbReference type="SAM" id="MobiDB-lite"/>
    </source>
</evidence>
<organism>
    <name type="scientific">Xenopus tropicalis</name>
    <name type="common">Western clawed frog</name>
    <name type="synonym">Silurana tropicalis</name>
    <dbReference type="NCBI Taxonomy" id="8364"/>
    <lineage>
        <taxon>Eukaryota</taxon>
        <taxon>Metazoa</taxon>
        <taxon>Chordata</taxon>
        <taxon>Craniata</taxon>
        <taxon>Vertebrata</taxon>
        <taxon>Euteleostomi</taxon>
        <taxon>Amphibia</taxon>
        <taxon>Batrachia</taxon>
        <taxon>Anura</taxon>
        <taxon>Pipoidea</taxon>
        <taxon>Pipidae</taxon>
        <taxon>Xenopodinae</taxon>
        <taxon>Xenopus</taxon>
        <taxon>Silurana</taxon>
    </lineage>
</organism>
<keyword id="KW-0103">Bromodomain</keyword>
<keyword id="KW-0156">Chromatin regulator</keyword>
<keyword id="KW-0539">Nucleus</keyword>
<keyword id="KW-1185">Reference proteome</keyword>
<keyword id="KW-0804">Transcription</keyword>
<keyword id="KW-0805">Transcription regulation</keyword>
<accession>Q6NVM8</accession>
<reference key="1">
    <citation type="submission" date="2004-03" db="EMBL/GenBank/DDBJ databases">
        <authorList>
            <consortium name="NIH - Xenopus Gene Collection (XGC) project"/>
        </authorList>
    </citation>
    <scope>NUCLEOTIDE SEQUENCE [LARGE SCALE MRNA]</scope>
    <source>
        <tissue>Embryo</tissue>
    </source>
</reference>
<comment type="function">
    <text evidence="1">Plays a role in chromatin remodeling and regulation of transcription. Acts as a chromatin reader that recognizes and binds acylated histones: binds histones that are acetylated and/or butyrylated.</text>
</comment>
<comment type="subunit">
    <text evidence="1">Binds acetylated histones H3 and H4. Binds butyrylated histone H4.</text>
</comment>
<comment type="subcellular location">
    <subcellularLocation>
        <location evidence="1">Nucleus</location>
    </subcellularLocation>
</comment>
<comment type="domain">
    <text evidence="1">The Bromo domain mediates interaction with histones that have acetylated lysine residues at specific positions. Also recognizes and binds histones that are butyrylated.</text>
</comment>